<keyword id="KW-1003">Cell membrane</keyword>
<keyword id="KW-0210">Decarboxylase</keyword>
<keyword id="KW-0444">Lipid biosynthesis</keyword>
<keyword id="KW-0443">Lipid metabolism</keyword>
<keyword id="KW-0456">Lyase</keyword>
<keyword id="KW-0472">Membrane</keyword>
<keyword id="KW-0594">Phospholipid biosynthesis</keyword>
<keyword id="KW-1208">Phospholipid metabolism</keyword>
<keyword id="KW-0670">Pyruvate</keyword>
<keyword id="KW-1185">Reference proteome</keyword>
<keyword id="KW-0865">Zymogen</keyword>
<name>PSD_HAEDU</name>
<dbReference type="EC" id="4.1.1.65" evidence="1"/>
<dbReference type="EMBL" id="AE017143">
    <property type="protein sequence ID" value="AAP95574.1"/>
    <property type="molecule type" value="Genomic_DNA"/>
</dbReference>
<dbReference type="RefSeq" id="WP_010944627.1">
    <property type="nucleotide sequence ID" value="NC_002940.2"/>
</dbReference>
<dbReference type="SMR" id="Q7VNA7"/>
<dbReference type="STRING" id="233412.HD_0649"/>
<dbReference type="KEGG" id="hdu:HD_0649"/>
<dbReference type="eggNOG" id="COG0688">
    <property type="taxonomic scope" value="Bacteria"/>
</dbReference>
<dbReference type="HOGENOM" id="CLU_029061_4_1_6"/>
<dbReference type="OrthoDB" id="9802030at2"/>
<dbReference type="UniPathway" id="UPA00558">
    <property type="reaction ID" value="UER00616"/>
</dbReference>
<dbReference type="Proteomes" id="UP000001022">
    <property type="component" value="Chromosome"/>
</dbReference>
<dbReference type="GO" id="GO:0005886">
    <property type="term" value="C:plasma membrane"/>
    <property type="evidence" value="ECO:0007669"/>
    <property type="project" value="UniProtKB-SubCell"/>
</dbReference>
<dbReference type="GO" id="GO:0004609">
    <property type="term" value="F:phosphatidylserine decarboxylase activity"/>
    <property type="evidence" value="ECO:0007669"/>
    <property type="project" value="UniProtKB-UniRule"/>
</dbReference>
<dbReference type="GO" id="GO:0006646">
    <property type="term" value="P:phosphatidylethanolamine biosynthetic process"/>
    <property type="evidence" value="ECO:0007669"/>
    <property type="project" value="UniProtKB-UniRule"/>
</dbReference>
<dbReference type="HAMAP" id="MF_00662">
    <property type="entry name" value="PS_decarb_PSD_B_type1"/>
    <property type="match status" value="1"/>
</dbReference>
<dbReference type="InterPro" id="IPR003817">
    <property type="entry name" value="PS_Dcarbxylase"/>
</dbReference>
<dbReference type="InterPro" id="IPR033177">
    <property type="entry name" value="PSD-B"/>
</dbReference>
<dbReference type="InterPro" id="IPR033178">
    <property type="entry name" value="PSD_type1_pro"/>
</dbReference>
<dbReference type="NCBIfam" id="TIGR00163">
    <property type="entry name" value="PS_decarb"/>
    <property type="match status" value="1"/>
</dbReference>
<dbReference type="PANTHER" id="PTHR10067">
    <property type="entry name" value="PHOSPHATIDYLSERINE DECARBOXYLASE"/>
    <property type="match status" value="1"/>
</dbReference>
<dbReference type="PANTHER" id="PTHR10067:SF6">
    <property type="entry name" value="PHOSPHATIDYLSERINE DECARBOXYLASE PROENZYME, MITOCHONDRIAL"/>
    <property type="match status" value="1"/>
</dbReference>
<dbReference type="Pfam" id="PF02666">
    <property type="entry name" value="PS_Dcarbxylase"/>
    <property type="match status" value="1"/>
</dbReference>
<proteinExistence type="inferred from homology"/>
<evidence type="ECO:0000255" key="1">
    <source>
        <dbReference type="HAMAP-Rule" id="MF_00662"/>
    </source>
</evidence>
<sequence>MSLKSYSTPTYWQRVKVACQYLFPQLPITRLAGWLAEQKWGMVTHFIIRIFAKQYNVNLAEAEKTNPADYTTFNEFFLRPLKENARPINQDDQAVCLPADGKISELGQINENRLLQAKGHYFTLETLLANDEEMAESFKNGSFITTYLSPRDYHRVHMPCDATLKKMIYVPGDLFSVNSFLAEHIPNLFARNERVICEFETAFGPMVQILVGATITASISTVWAGIINPPRSKDVVEYNYQTTGETAIHLKKGDEMGAFRLGSTVINLFPQATVELVSHLQAGVETRMGERFAKIIK</sequence>
<gene>
    <name evidence="1" type="primary">psd</name>
    <name type="ordered locus">HD_0649</name>
</gene>
<feature type="chain" id="PRO_0000029661" description="Phosphatidylserine decarboxylase beta chain" evidence="1">
    <location>
        <begin position="1"/>
        <end position="262"/>
    </location>
</feature>
<feature type="chain" id="PRO_0000029662" description="Phosphatidylserine decarboxylase alpha chain" evidence="1">
    <location>
        <begin position="263"/>
        <end position="297"/>
    </location>
</feature>
<feature type="active site" description="Charge relay system; for autoendoproteolytic cleavage activity" evidence="1">
    <location>
        <position position="100"/>
    </location>
</feature>
<feature type="active site" description="Charge relay system; for autoendoproteolytic cleavage activity" evidence="1">
    <location>
        <position position="157"/>
    </location>
</feature>
<feature type="active site" description="Charge relay system; for autoendoproteolytic cleavage activity" evidence="1">
    <location>
        <position position="263"/>
    </location>
</feature>
<feature type="active site" description="Schiff-base intermediate with substrate; via pyruvic acid; for decarboxylase activity" evidence="1">
    <location>
        <position position="263"/>
    </location>
</feature>
<feature type="site" description="Cleavage (non-hydrolytic); by autocatalysis" evidence="1">
    <location>
        <begin position="262"/>
        <end position="263"/>
    </location>
</feature>
<feature type="modified residue" description="Pyruvic acid (Ser); by autocatalysis" evidence="1">
    <location>
        <position position="263"/>
    </location>
</feature>
<protein>
    <recommendedName>
        <fullName evidence="1">Phosphatidylserine decarboxylase proenzyme</fullName>
        <ecNumber evidence="1">4.1.1.65</ecNumber>
    </recommendedName>
    <component>
        <recommendedName>
            <fullName evidence="1">Phosphatidylserine decarboxylase alpha chain</fullName>
        </recommendedName>
    </component>
    <component>
        <recommendedName>
            <fullName evidence="1">Phosphatidylserine decarboxylase beta chain</fullName>
        </recommendedName>
    </component>
</protein>
<accession>Q7VNA7</accession>
<reference key="1">
    <citation type="submission" date="2003-06" db="EMBL/GenBank/DDBJ databases">
        <title>The complete genome sequence of Haemophilus ducreyi.</title>
        <authorList>
            <person name="Munson R.S. Jr."/>
            <person name="Ray W.C."/>
            <person name="Mahairas G."/>
            <person name="Sabo P."/>
            <person name="Mungur R."/>
            <person name="Johnson L."/>
            <person name="Nguyen D."/>
            <person name="Wang J."/>
            <person name="Forst C."/>
            <person name="Hood L."/>
        </authorList>
    </citation>
    <scope>NUCLEOTIDE SEQUENCE [LARGE SCALE GENOMIC DNA]</scope>
    <source>
        <strain>35000HP / ATCC 700724</strain>
    </source>
</reference>
<organism>
    <name type="scientific">Haemophilus ducreyi (strain 35000HP / ATCC 700724)</name>
    <dbReference type="NCBI Taxonomy" id="233412"/>
    <lineage>
        <taxon>Bacteria</taxon>
        <taxon>Pseudomonadati</taxon>
        <taxon>Pseudomonadota</taxon>
        <taxon>Gammaproteobacteria</taxon>
        <taxon>Pasteurellales</taxon>
        <taxon>Pasteurellaceae</taxon>
        <taxon>Haemophilus</taxon>
    </lineage>
</organism>
<comment type="function">
    <text evidence="1">Catalyzes the formation of phosphatidylethanolamine (PtdEtn) from phosphatidylserine (PtdSer).</text>
</comment>
<comment type="catalytic activity">
    <reaction evidence="1">
        <text>a 1,2-diacyl-sn-glycero-3-phospho-L-serine + H(+) = a 1,2-diacyl-sn-glycero-3-phosphoethanolamine + CO2</text>
        <dbReference type="Rhea" id="RHEA:20828"/>
        <dbReference type="ChEBI" id="CHEBI:15378"/>
        <dbReference type="ChEBI" id="CHEBI:16526"/>
        <dbReference type="ChEBI" id="CHEBI:57262"/>
        <dbReference type="ChEBI" id="CHEBI:64612"/>
        <dbReference type="EC" id="4.1.1.65"/>
    </reaction>
</comment>
<comment type="cofactor">
    <cofactor evidence="1">
        <name>pyruvate</name>
        <dbReference type="ChEBI" id="CHEBI:15361"/>
    </cofactor>
    <text evidence="1">Binds 1 pyruvoyl group covalently per subunit.</text>
</comment>
<comment type="pathway">
    <text evidence="1">Phospholipid metabolism; phosphatidylethanolamine biosynthesis; phosphatidylethanolamine from CDP-diacylglycerol: step 2/2.</text>
</comment>
<comment type="subunit">
    <text evidence="1">Heterodimer of a large membrane-associated beta subunit and a small pyruvoyl-containing alpha subunit.</text>
</comment>
<comment type="subcellular location">
    <subcellularLocation>
        <location evidence="1">Cell membrane</location>
        <topology evidence="1">Peripheral membrane protein</topology>
    </subcellularLocation>
</comment>
<comment type="PTM">
    <text evidence="1">Is synthesized initially as an inactive proenzyme. Formation of the active enzyme involves a self-maturation process in which the active site pyruvoyl group is generated from an internal serine residue via an autocatalytic post-translational modification. Two non-identical subunits are generated from the proenzyme in this reaction, and the pyruvate is formed at the N-terminus of the alpha chain, which is derived from the carboxyl end of the proenzyme. The autoendoproteolytic cleavage occurs by a canonical serine protease mechanism, in which the side chain hydroxyl group of the serine supplies its oxygen atom to form the C-terminus of the beta chain, while the remainder of the serine residue undergoes an oxidative deamination to produce ammonia and the pyruvoyl prosthetic group on the alpha chain. During this reaction, the Ser that is part of the protease active site of the proenzyme becomes the pyruvoyl prosthetic group, which constitutes an essential element of the active site of the mature decarboxylase.</text>
</comment>
<comment type="similarity">
    <text evidence="1">Belongs to the phosphatidylserine decarboxylase family. PSD-B subfamily. Prokaryotic type I sub-subfamily.</text>
</comment>